<geneLocation type="chloroplast"/>
<dbReference type="EC" id="1.10.3.9" evidence="1"/>
<dbReference type="EMBL" id="AB002583">
    <property type="protein sequence ID" value="BAC76132.1"/>
    <property type="molecule type" value="Genomic_DNA"/>
</dbReference>
<dbReference type="RefSeq" id="NP_848970.1">
    <property type="nucleotide sequence ID" value="NC_004799.1"/>
</dbReference>
<dbReference type="SMR" id="Q85G59"/>
<dbReference type="STRING" id="280699.Q85G59"/>
<dbReference type="EnsemblPlants" id="CMV047CT">
    <property type="protein sequence ID" value="CMV047CT"/>
    <property type="gene ID" value="CMV047C"/>
</dbReference>
<dbReference type="GeneID" id="844946"/>
<dbReference type="Gramene" id="CMV047CT">
    <property type="protein sequence ID" value="CMV047CT"/>
    <property type="gene ID" value="CMV047C"/>
</dbReference>
<dbReference type="KEGG" id="cme:CymeCp038"/>
<dbReference type="eggNOG" id="ENOG502QR09">
    <property type="taxonomic scope" value="Eukaryota"/>
</dbReference>
<dbReference type="HOGENOM" id="CLU_054206_1_0_1"/>
<dbReference type="Proteomes" id="UP000007014">
    <property type="component" value="Chloroplast"/>
</dbReference>
<dbReference type="GO" id="GO:0009535">
    <property type="term" value="C:chloroplast thylakoid membrane"/>
    <property type="evidence" value="ECO:0007669"/>
    <property type="project" value="UniProtKB-SubCell"/>
</dbReference>
<dbReference type="GO" id="GO:0009523">
    <property type="term" value="C:photosystem II"/>
    <property type="evidence" value="ECO:0007669"/>
    <property type="project" value="UniProtKB-KW"/>
</dbReference>
<dbReference type="GO" id="GO:0016168">
    <property type="term" value="F:chlorophyll binding"/>
    <property type="evidence" value="ECO:0007669"/>
    <property type="project" value="UniProtKB-UniRule"/>
</dbReference>
<dbReference type="GO" id="GO:0045156">
    <property type="term" value="F:electron transporter, transferring electrons within the cyclic electron transport pathway of photosynthesis activity"/>
    <property type="evidence" value="ECO:0007669"/>
    <property type="project" value="InterPro"/>
</dbReference>
<dbReference type="GO" id="GO:0005506">
    <property type="term" value="F:iron ion binding"/>
    <property type="evidence" value="ECO:0007669"/>
    <property type="project" value="UniProtKB-UniRule"/>
</dbReference>
<dbReference type="GO" id="GO:0016682">
    <property type="term" value="F:oxidoreductase activity, acting on diphenols and related substances as donors, oxygen as acceptor"/>
    <property type="evidence" value="ECO:0007669"/>
    <property type="project" value="UniProtKB-UniRule"/>
</dbReference>
<dbReference type="GO" id="GO:0009772">
    <property type="term" value="P:photosynthetic electron transport in photosystem II"/>
    <property type="evidence" value="ECO:0007669"/>
    <property type="project" value="InterPro"/>
</dbReference>
<dbReference type="GO" id="GO:0009635">
    <property type="term" value="P:response to herbicide"/>
    <property type="evidence" value="ECO:0007669"/>
    <property type="project" value="UniProtKB-KW"/>
</dbReference>
<dbReference type="CDD" id="cd09289">
    <property type="entry name" value="Photosystem-II_D1"/>
    <property type="match status" value="1"/>
</dbReference>
<dbReference type="FunFam" id="1.20.85.10:FF:000002">
    <property type="entry name" value="Photosystem II protein D1"/>
    <property type="match status" value="1"/>
</dbReference>
<dbReference type="Gene3D" id="1.20.85.10">
    <property type="entry name" value="Photosystem II protein D1-like"/>
    <property type="match status" value="1"/>
</dbReference>
<dbReference type="HAMAP" id="MF_01379">
    <property type="entry name" value="PSII_PsbA_D1"/>
    <property type="match status" value="1"/>
</dbReference>
<dbReference type="InterPro" id="IPR055266">
    <property type="entry name" value="D1/D2"/>
</dbReference>
<dbReference type="InterPro" id="IPR036854">
    <property type="entry name" value="Photo_II_D1/D2_sf"/>
</dbReference>
<dbReference type="InterPro" id="IPR000484">
    <property type="entry name" value="Photo_RC_L/M"/>
</dbReference>
<dbReference type="InterPro" id="IPR055265">
    <property type="entry name" value="Photo_RC_L/M_CS"/>
</dbReference>
<dbReference type="InterPro" id="IPR005867">
    <property type="entry name" value="PSII_D1"/>
</dbReference>
<dbReference type="NCBIfam" id="TIGR01151">
    <property type="entry name" value="psbA"/>
    <property type="match status" value="1"/>
</dbReference>
<dbReference type="PANTHER" id="PTHR33149:SF12">
    <property type="entry name" value="PHOTOSYSTEM II D2 PROTEIN"/>
    <property type="match status" value="1"/>
</dbReference>
<dbReference type="PANTHER" id="PTHR33149">
    <property type="entry name" value="PHOTOSYSTEM II PROTEIN D1"/>
    <property type="match status" value="1"/>
</dbReference>
<dbReference type="Pfam" id="PF00124">
    <property type="entry name" value="Photo_RC"/>
    <property type="match status" value="1"/>
</dbReference>
<dbReference type="PRINTS" id="PR00256">
    <property type="entry name" value="REACTNCENTRE"/>
</dbReference>
<dbReference type="SUPFAM" id="SSF81483">
    <property type="entry name" value="Bacterial photosystem II reaction centre, L and M subunits"/>
    <property type="match status" value="1"/>
</dbReference>
<dbReference type="PROSITE" id="PS00244">
    <property type="entry name" value="REACTION_CENTER"/>
    <property type="match status" value="1"/>
</dbReference>
<reference key="1">
    <citation type="journal article" date="2003" name="DNA Res.">
        <title>Complete sequence and analysis of the plastid genome of the unicellular red alga Cyanidioschyzon merolae.</title>
        <authorList>
            <person name="Ohta N."/>
            <person name="Matsuzaki M."/>
            <person name="Misumi O."/>
            <person name="Miyagishima S.-Y."/>
            <person name="Nozaki H."/>
            <person name="Tanaka K."/>
            <person name="Shin-i T."/>
            <person name="Kohara Y."/>
            <person name="Kuroiwa T."/>
        </authorList>
    </citation>
    <scope>NUCLEOTIDE SEQUENCE [LARGE SCALE GENOMIC DNA]</scope>
    <source>
        <strain>NIES-3377 / 10D</strain>
    </source>
</reference>
<proteinExistence type="inferred from homology"/>
<evidence type="ECO:0000255" key="1">
    <source>
        <dbReference type="HAMAP-Rule" id="MF_01379"/>
    </source>
</evidence>
<comment type="function">
    <text evidence="1">Photosystem II (PSII) is a light-driven water:plastoquinone oxidoreductase that uses light energy to abstract electrons from H(2)O, generating O(2) and a proton gradient subsequently used for ATP formation. It consists of a core antenna complex that captures photons, and an electron transfer chain that converts photonic excitation into a charge separation. The D1/D2 (PsbA/PsbD) reaction center heterodimer binds P680, the primary electron donor of PSII as well as several subsequent electron acceptors.</text>
</comment>
<comment type="catalytic activity">
    <reaction evidence="1">
        <text>2 a plastoquinone + 4 hnu + 2 H2O = 2 a plastoquinol + O2</text>
        <dbReference type="Rhea" id="RHEA:36359"/>
        <dbReference type="Rhea" id="RHEA-COMP:9561"/>
        <dbReference type="Rhea" id="RHEA-COMP:9562"/>
        <dbReference type="ChEBI" id="CHEBI:15377"/>
        <dbReference type="ChEBI" id="CHEBI:15379"/>
        <dbReference type="ChEBI" id="CHEBI:17757"/>
        <dbReference type="ChEBI" id="CHEBI:30212"/>
        <dbReference type="ChEBI" id="CHEBI:62192"/>
        <dbReference type="EC" id="1.10.3.9"/>
    </reaction>
</comment>
<comment type="cofactor">
    <text evidence="1">The D1/D2 heterodimer binds P680, chlorophylls that are the primary electron donor of PSII, and subsequent electron acceptors. It shares a non-heme iron and each subunit binds pheophytin, quinone, additional chlorophylls, carotenoids and lipids. D1 provides most of the ligands for the Mn4-Ca-O5 cluster of the oxygen-evolving complex (OEC). There is also a Cl(-1) ion associated with D1 and D2, which is required for oxygen evolution. The PSII complex binds additional chlorophylls, carotenoids and specific lipids.</text>
</comment>
<comment type="subunit">
    <text evidence="1">PSII is composed of 1 copy each of membrane proteins PsbA, PsbB, PsbC, PsbD, PsbE, PsbF, PsbH, PsbI, PsbJ, PsbK, PsbL, PsbM, PsbT, PsbX, PsbY, PsbZ, Psb30/Ycf12, at least 3 peripheral proteins of the oxygen-evolving complex and a large number of cofactors. It forms dimeric complexes.</text>
</comment>
<comment type="subcellular location">
    <subcellularLocation>
        <location evidence="1">Plastid</location>
        <location evidence="1">Chloroplast thylakoid membrane</location>
        <topology evidence="1">Multi-pass membrane protein</topology>
    </subcellularLocation>
</comment>
<comment type="PTM">
    <text evidence="1">Tyr-161 forms a radical intermediate that is referred to as redox-active TyrZ, YZ or Y-Z.</text>
</comment>
<comment type="PTM">
    <text evidence="1">C-terminally processed by CTPA; processing is essential to allow assembly of the oxygen-evolving complex and thus photosynthetic growth.</text>
</comment>
<comment type="miscellaneous">
    <text evidence="1">2 of the reaction center chlorophylls (ChlD1 and ChlD2) are entirely coordinated by water.</text>
</comment>
<comment type="miscellaneous">
    <text evidence="1">Herbicides such as atrazine, BNT, diuron or ioxynil bind in the Q(B) binding site and block subsequent electron transfer.</text>
</comment>
<comment type="similarity">
    <text evidence="1">Belongs to the reaction center PufL/M/PsbA/D family.</text>
</comment>
<gene>
    <name evidence="1" type="primary">psbA</name>
</gene>
<keyword id="KW-0106">Calcium</keyword>
<keyword id="KW-0148">Chlorophyll</keyword>
<keyword id="KW-0150">Chloroplast</keyword>
<keyword id="KW-0157">Chromophore</keyword>
<keyword id="KW-0249">Electron transport</keyword>
<keyword id="KW-0359">Herbicide resistance</keyword>
<keyword id="KW-0408">Iron</keyword>
<keyword id="KW-0460">Magnesium</keyword>
<keyword id="KW-0464">Manganese</keyword>
<keyword id="KW-0472">Membrane</keyword>
<keyword id="KW-0479">Metal-binding</keyword>
<keyword id="KW-0560">Oxidoreductase</keyword>
<keyword id="KW-0602">Photosynthesis</keyword>
<keyword id="KW-0604">Photosystem II</keyword>
<keyword id="KW-0934">Plastid</keyword>
<keyword id="KW-1185">Reference proteome</keyword>
<keyword id="KW-0793">Thylakoid</keyword>
<keyword id="KW-0812">Transmembrane</keyword>
<keyword id="KW-1133">Transmembrane helix</keyword>
<keyword id="KW-0813">Transport</keyword>
<protein>
    <recommendedName>
        <fullName evidence="1">Photosystem II protein D1</fullName>
        <shortName evidence="1">PSII D1 protein</shortName>
        <ecNumber evidence="1">1.10.3.9</ecNumber>
    </recommendedName>
    <alternativeName>
        <fullName evidence="1">Photosystem II Q(B) protein</fullName>
    </alternativeName>
</protein>
<organism>
    <name type="scientific">Cyanidioschyzon merolae (strain NIES-3377 / 10D)</name>
    <name type="common">Unicellular red alga</name>
    <dbReference type="NCBI Taxonomy" id="280699"/>
    <lineage>
        <taxon>Eukaryota</taxon>
        <taxon>Rhodophyta</taxon>
        <taxon>Bangiophyceae</taxon>
        <taxon>Cyanidiales</taxon>
        <taxon>Cyanidiaceae</taxon>
        <taxon>Cyanidioschyzon</taxon>
    </lineage>
</organism>
<accession>Q85G59</accession>
<name>PSBA_CYAM1</name>
<feature type="chain" id="PRO_0000316506" description="Photosystem II protein D1" evidence="1">
    <location>
        <begin position="1"/>
        <end position="344"/>
    </location>
</feature>
<feature type="propeptide" id="PRO_0000316507" evidence="1">
    <location>
        <begin position="345"/>
        <end position="360"/>
    </location>
</feature>
<feature type="transmembrane region" description="Helical" evidence="1">
    <location>
        <begin position="29"/>
        <end position="46"/>
    </location>
</feature>
<feature type="transmembrane region" description="Helical" evidence="1">
    <location>
        <begin position="118"/>
        <end position="133"/>
    </location>
</feature>
<feature type="transmembrane region" description="Helical" evidence="1">
    <location>
        <begin position="142"/>
        <end position="156"/>
    </location>
</feature>
<feature type="transmembrane region" description="Helical" evidence="1">
    <location>
        <begin position="197"/>
        <end position="218"/>
    </location>
</feature>
<feature type="transmembrane region" description="Helical" evidence="1">
    <location>
        <begin position="274"/>
        <end position="288"/>
    </location>
</feature>
<feature type="binding site" description="axial binding residue" evidence="1">
    <location>
        <position position="118"/>
    </location>
    <ligand>
        <name>chlorophyll a</name>
        <dbReference type="ChEBI" id="CHEBI:58416"/>
        <label>ChlzD1</label>
    </ligand>
    <ligandPart>
        <name>Mg</name>
        <dbReference type="ChEBI" id="CHEBI:25107"/>
    </ligandPart>
</feature>
<feature type="binding site" evidence="1">
    <location>
        <position position="126"/>
    </location>
    <ligand>
        <name>pheophytin a</name>
        <dbReference type="ChEBI" id="CHEBI:136840"/>
        <label>D1</label>
    </ligand>
</feature>
<feature type="binding site" evidence="1">
    <location>
        <position position="170"/>
    </location>
    <ligand>
        <name>[CaMn4O5] cluster</name>
        <dbReference type="ChEBI" id="CHEBI:189552"/>
    </ligand>
</feature>
<feature type="binding site" evidence="1">
    <location>
        <position position="189"/>
    </location>
    <ligand>
        <name>[CaMn4O5] cluster</name>
        <dbReference type="ChEBI" id="CHEBI:189552"/>
    </ligand>
</feature>
<feature type="binding site" description="axial binding residue" evidence="1">
    <location>
        <position position="198"/>
    </location>
    <ligand>
        <name>chlorophyll a</name>
        <dbReference type="ChEBI" id="CHEBI:58416"/>
        <label>PD1</label>
    </ligand>
    <ligandPart>
        <name>Mg</name>
        <dbReference type="ChEBI" id="CHEBI:25107"/>
    </ligandPart>
</feature>
<feature type="binding site" evidence="1">
    <location>
        <position position="215"/>
    </location>
    <ligand>
        <name>a quinone</name>
        <dbReference type="ChEBI" id="CHEBI:132124"/>
        <label>B</label>
    </ligand>
</feature>
<feature type="binding site" evidence="1">
    <location>
        <position position="215"/>
    </location>
    <ligand>
        <name>Fe cation</name>
        <dbReference type="ChEBI" id="CHEBI:24875"/>
        <note>ligand shared with heterodimeric partner</note>
    </ligand>
</feature>
<feature type="binding site" evidence="1">
    <location>
        <begin position="264"/>
        <end position="265"/>
    </location>
    <ligand>
        <name>a quinone</name>
        <dbReference type="ChEBI" id="CHEBI:132124"/>
        <label>B</label>
    </ligand>
</feature>
<feature type="binding site" evidence="1">
    <location>
        <position position="272"/>
    </location>
    <ligand>
        <name>Fe cation</name>
        <dbReference type="ChEBI" id="CHEBI:24875"/>
        <note>ligand shared with heterodimeric partner</note>
    </ligand>
</feature>
<feature type="binding site" evidence="1">
    <location>
        <position position="332"/>
    </location>
    <ligand>
        <name>[CaMn4O5] cluster</name>
        <dbReference type="ChEBI" id="CHEBI:189552"/>
    </ligand>
</feature>
<feature type="binding site" evidence="1">
    <location>
        <position position="333"/>
    </location>
    <ligand>
        <name>[CaMn4O5] cluster</name>
        <dbReference type="ChEBI" id="CHEBI:189552"/>
    </ligand>
</feature>
<feature type="binding site" evidence="1">
    <location>
        <position position="342"/>
    </location>
    <ligand>
        <name>[CaMn4O5] cluster</name>
        <dbReference type="ChEBI" id="CHEBI:189552"/>
    </ligand>
</feature>
<feature type="binding site" evidence="1">
    <location>
        <position position="344"/>
    </location>
    <ligand>
        <name>[CaMn4O5] cluster</name>
        <dbReference type="ChEBI" id="CHEBI:189552"/>
    </ligand>
</feature>
<feature type="site" description="Tyrosine radical intermediate" evidence="1">
    <location>
        <position position="161"/>
    </location>
</feature>
<feature type="site" description="Stabilizes free radical intermediate" evidence="1">
    <location>
        <position position="190"/>
    </location>
</feature>
<feature type="site" description="Cleavage; by CTPA" evidence="1">
    <location>
        <begin position="344"/>
        <end position="345"/>
    </location>
</feature>
<sequence>MTATLQRRASANLWERFCAWITSTENRLYIGWFGVLMIPCLLTATCVFIIAFVAAPPVDIDGIREPVSGSLFYGNNIITGAVVPTSNAIGLHFYPIWEAASVDEWLYNGGPYQLIVLHFLIGVASYMGREWELSYRLGMRPWICVAFSAPVAAATAVFLIYPIGQGSFSDGMPLGISGTFNFMLVFQAEHNILMHPFHMAGVAGVFGGALFSAMHGSLVTSSLIRETSENESLNNGYKFGQEEETYNIVAAHGYFGRLIFQYASFNNSRSLHFFLGAWPVVGIWLTAIGISTMAFNLNGFNFNQSVVDSEGRVINTWADILNRANLGIEVMHERNAHNFPLDLASNSVVPVALTAPSVEA</sequence>